<gene>
    <name evidence="12" type="primary">PIN6</name>
    <name evidence="14" type="ordered locus">At1g77110</name>
    <name evidence="15" type="ORF">F22K20.18</name>
</gene>
<dbReference type="EMBL" id="AF087819">
    <property type="protein sequence ID" value="AAD52696.1"/>
    <property type="molecule type" value="mRNA"/>
</dbReference>
<dbReference type="EMBL" id="AC002291">
    <property type="protein sequence ID" value="AAC00629.1"/>
    <property type="status" value="ALT_SEQ"/>
    <property type="molecule type" value="Genomic_DNA"/>
</dbReference>
<dbReference type="EMBL" id="CP002684">
    <property type="protein sequence ID" value="AEE35936.1"/>
    <property type="molecule type" value="Genomic_DNA"/>
</dbReference>
<dbReference type="PIR" id="A96800">
    <property type="entry name" value="A96800"/>
</dbReference>
<dbReference type="RefSeq" id="NP_177836.1">
    <property type="nucleotide sequence ID" value="NM_106361.4"/>
</dbReference>
<dbReference type="SMR" id="Q9SQH6"/>
<dbReference type="BioGRID" id="29265">
    <property type="interactions" value="29"/>
</dbReference>
<dbReference type="IntAct" id="Q9SQH6">
    <property type="interactions" value="29"/>
</dbReference>
<dbReference type="STRING" id="3702.Q9SQH6"/>
<dbReference type="GlyCosmos" id="Q9SQH6">
    <property type="glycosylation" value="1 site, No reported glycans"/>
</dbReference>
<dbReference type="iPTMnet" id="Q9SQH6"/>
<dbReference type="PaxDb" id="3702-AT1G77110.1"/>
<dbReference type="ProteomicsDB" id="235021"/>
<dbReference type="EnsemblPlants" id="AT1G77110.1">
    <property type="protein sequence ID" value="AT1G77110.1"/>
    <property type="gene ID" value="AT1G77110"/>
</dbReference>
<dbReference type="GeneID" id="844046"/>
<dbReference type="Gramene" id="AT1G77110.1">
    <property type="protein sequence ID" value="AT1G77110.1"/>
    <property type="gene ID" value="AT1G77110"/>
</dbReference>
<dbReference type="KEGG" id="ath:AT1G77110"/>
<dbReference type="Araport" id="AT1G77110"/>
<dbReference type="TAIR" id="AT1G77110">
    <property type="gene designation" value="PIN6"/>
</dbReference>
<dbReference type="eggNOG" id="ENOG502QVQM">
    <property type="taxonomic scope" value="Eukaryota"/>
</dbReference>
<dbReference type="HOGENOM" id="CLU_019285_1_1_1"/>
<dbReference type="InParanoid" id="Q9SQH6"/>
<dbReference type="PhylomeDB" id="Q9SQH6"/>
<dbReference type="PRO" id="PR:Q9SQH6"/>
<dbReference type="Proteomes" id="UP000006548">
    <property type="component" value="Chromosome 1"/>
</dbReference>
<dbReference type="ExpressionAtlas" id="Q9SQH6">
    <property type="expression patterns" value="baseline and differential"/>
</dbReference>
<dbReference type="GO" id="GO:0071944">
    <property type="term" value="C:cell periphery"/>
    <property type="evidence" value="ECO:0000250"/>
    <property type="project" value="UniProtKB"/>
</dbReference>
<dbReference type="GO" id="GO:0005789">
    <property type="term" value="C:endoplasmic reticulum membrane"/>
    <property type="evidence" value="ECO:0007669"/>
    <property type="project" value="UniProtKB-SubCell"/>
</dbReference>
<dbReference type="GO" id="GO:0005886">
    <property type="term" value="C:plasma membrane"/>
    <property type="evidence" value="ECO:0000250"/>
    <property type="project" value="UniProtKB"/>
</dbReference>
<dbReference type="GO" id="GO:0010329">
    <property type="term" value="F:auxin efflux transmembrane transporter activity"/>
    <property type="evidence" value="ECO:0000250"/>
    <property type="project" value="UniProtKB"/>
</dbReference>
<dbReference type="GO" id="GO:0042802">
    <property type="term" value="F:identical protein binding"/>
    <property type="evidence" value="ECO:0000250"/>
    <property type="project" value="UniProtKB"/>
</dbReference>
<dbReference type="GO" id="GO:0042803">
    <property type="term" value="F:protein homodimerization activity"/>
    <property type="evidence" value="ECO:0000250"/>
    <property type="project" value="UniProtKB"/>
</dbReference>
<dbReference type="GO" id="GO:0010315">
    <property type="term" value="P:auxin export across the plasma membrane"/>
    <property type="evidence" value="ECO:0000250"/>
    <property type="project" value="UniProtKB"/>
</dbReference>
<dbReference type="GO" id="GO:0009926">
    <property type="term" value="P:auxin polar transport"/>
    <property type="evidence" value="ECO:0000315"/>
    <property type="project" value="CACAO"/>
</dbReference>
<dbReference type="GO" id="GO:0009734">
    <property type="term" value="P:auxin-activated signaling pathway"/>
    <property type="evidence" value="ECO:0007669"/>
    <property type="project" value="UniProtKB-KW"/>
</dbReference>
<dbReference type="GO" id="GO:0010540">
    <property type="term" value="P:basipetal auxin transport"/>
    <property type="evidence" value="ECO:0000315"/>
    <property type="project" value="CACAO"/>
</dbReference>
<dbReference type="GO" id="GO:0010105">
    <property type="term" value="P:negative regulation of ethylene-activated signaling pathway"/>
    <property type="evidence" value="ECO:0000315"/>
    <property type="project" value="CACAO"/>
</dbReference>
<dbReference type="GO" id="GO:1901332">
    <property type="term" value="P:negative regulation of lateral root development"/>
    <property type="evidence" value="ECO:0000315"/>
    <property type="project" value="CACAO"/>
</dbReference>
<dbReference type="GO" id="GO:0048767">
    <property type="term" value="P:root hair elongation"/>
    <property type="evidence" value="ECO:0000315"/>
    <property type="project" value="CACAO"/>
</dbReference>
<dbReference type="InterPro" id="IPR014024">
    <property type="entry name" value="Auxin_eff_plant"/>
</dbReference>
<dbReference type="InterPro" id="IPR051107">
    <property type="entry name" value="Auxin_Efflux_Carrier"/>
</dbReference>
<dbReference type="InterPro" id="IPR004776">
    <property type="entry name" value="Mem_transp_PIN-like"/>
</dbReference>
<dbReference type="NCBIfam" id="TIGR00946">
    <property type="entry name" value="2a69"/>
    <property type="match status" value="1"/>
</dbReference>
<dbReference type="PANTHER" id="PTHR31752">
    <property type="entry name" value="AUXIN EFFLUX CARRIER COMPONENT 1B-RELATED"/>
    <property type="match status" value="1"/>
</dbReference>
<dbReference type="PANTHER" id="PTHR31752:SF56">
    <property type="entry name" value="AUXIN EFFLUX CARRIER COMPONENT 6"/>
    <property type="match status" value="1"/>
</dbReference>
<dbReference type="Pfam" id="PF03547">
    <property type="entry name" value="Mem_trans"/>
    <property type="match status" value="1"/>
</dbReference>
<protein>
    <recommendedName>
        <fullName evidence="12">Auxin efflux carrier component 6</fullName>
        <shortName evidence="12">AtPIN6</shortName>
    </recommendedName>
</protein>
<feature type="chain" id="PRO_0000123785" description="Auxin efflux carrier component 6">
    <location>
        <begin position="1"/>
        <end position="570"/>
    </location>
</feature>
<feature type="topological domain" description="Extracellular" evidence="13">
    <location>
        <begin position="1"/>
        <end position="6"/>
    </location>
</feature>
<feature type="transmembrane region" description="Helical; Name=1" evidence="3">
    <location>
        <begin position="7"/>
        <end position="27"/>
    </location>
</feature>
<feature type="topological domain" description="Cytoplasmic" evidence="13">
    <location>
        <begin position="28"/>
        <end position="38"/>
    </location>
</feature>
<feature type="transmembrane region" description="Helical; Name=2" evidence="3">
    <location>
        <begin position="39"/>
        <end position="59"/>
    </location>
</feature>
<feature type="topological domain" description="Extracellular" evidence="13">
    <location>
        <begin position="60"/>
        <end position="70"/>
    </location>
</feature>
<feature type="transmembrane region" description="Helical; Name=3" evidence="3">
    <location>
        <begin position="71"/>
        <end position="91"/>
    </location>
</feature>
<feature type="topological domain" description="Cytoplasmic" evidence="13">
    <location>
        <begin position="92"/>
        <end position="100"/>
    </location>
</feature>
<feature type="transmembrane region" description="Helical; Name=4" evidence="3">
    <location>
        <begin position="101"/>
        <end position="121"/>
    </location>
</feature>
<feature type="topological domain" description="Extracellular" evidence="13">
    <location>
        <begin position="122"/>
        <end position="131"/>
    </location>
</feature>
<feature type="transmembrane region" description="Helical; Name=5" evidence="3">
    <location>
        <begin position="132"/>
        <end position="152"/>
    </location>
</feature>
<feature type="topological domain" description="Cytoplasmic" evidence="13">
    <location>
        <begin position="153"/>
        <end position="430"/>
    </location>
</feature>
<feature type="transmembrane region" description="Helical; Name=6" evidence="3">
    <location>
        <begin position="431"/>
        <end position="451"/>
    </location>
</feature>
<feature type="topological domain" description="Extracellular" evidence="13">
    <location>
        <begin position="452"/>
        <end position="454"/>
    </location>
</feature>
<feature type="transmembrane region" description="Helical; Name=7" evidence="3">
    <location>
        <begin position="455"/>
        <end position="475"/>
    </location>
</feature>
<feature type="topological domain" description="Cytoplasmic" evidence="13">
    <location>
        <begin position="476"/>
        <end position="491"/>
    </location>
</feature>
<feature type="transmembrane region" description="Helical; Name=8" evidence="3">
    <location>
        <begin position="492"/>
        <end position="512"/>
    </location>
</feature>
<feature type="topological domain" description="Extracellular" evidence="13">
    <location>
        <begin position="513"/>
        <end position="515"/>
    </location>
</feature>
<feature type="transmembrane region" description="Helical; Name=9" evidence="3">
    <location>
        <begin position="516"/>
        <end position="536"/>
    </location>
</feature>
<feature type="topological domain" description="Cytoplasmic" evidence="13">
    <location>
        <begin position="537"/>
        <end position="549"/>
    </location>
</feature>
<feature type="transmembrane region" description="Helical; Name=10" evidence="3">
    <location>
        <begin position="550"/>
        <end position="570"/>
    </location>
</feature>
<feature type="binding site" evidence="2">
    <location>
        <position position="51"/>
    </location>
    <ligand>
        <name>(indol-3-yl)acetate</name>
        <dbReference type="ChEBI" id="CHEBI:30854"/>
    </ligand>
</feature>
<feature type="binding site" evidence="2">
    <location>
        <position position="112"/>
    </location>
    <ligand>
        <name>(indol-3-yl)acetate</name>
        <dbReference type="ChEBI" id="CHEBI:30854"/>
    </ligand>
</feature>
<feature type="binding site" evidence="2">
    <location>
        <position position="114"/>
    </location>
    <ligand>
        <name>(indol-3-yl)acetate</name>
        <dbReference type="ChEBI" id="CHEBI:30854"/>
    </ligand>
</feature>
<feature type="binding site" evidence="2">
    <location>
        <position position="145"/>
    </location>
    <ligand>
        <name>(indol-3-yl)acetate</name>
        <dbReference type="ChEBI" id="CHEBI:30854"/>
    </ligand>
</feature>
<feature type="binding site" evidence="2">
    <location>
        <position position="530"/>
    </location>
    <ligand>
        <name>(indol-3-yl)acetate</name>
        <dbReference type="ChEBI" id="CHEBI:30854"/>
    </ligand>
</feature>
<feature type="binding site" evidence="2">
    <location>
        <position position="531"/>
    </location>
    <ligand>
        <name>(indol-3-yl)acetate</name>
        <dbReference type="ChEBI" id="CHEBI:30854"/>
    </ligand>
</feature>
<feature type="modified residue" description="Phosphoserine" evidence="1">
    <location>
        <position position="230"/>
    </location>
</feature>
<feature type="modified residue" description="Phosphoserine" evidence="1">
    <location>
        <position position="308"/>
    </location>
</feature>
<feature type="sequence conflict" description="In Ref. 1; AAD52696." evidence="13" ref="1">
    <original>S</original>
    <variation>P</variation>
    <location>
        <position position="221"/>
    </location>
</feature>
<evidence type="ECO:0000250" key="1">
    <source>
        <dbReference type="UniProtKB" id="Q9C6B8"/>
    </source>
</evidence>
<evidence type="ECO:0000250" key="2">
    <source>
        <dbReference type="UniProtKB" id="Q9LFP6"/>
    </source>
</evidence>
<evidence type="ECO:0000255" key="3"/>
<evidence type="ECO:0000269" key="4">
    <source>
    </source>
</evidence>
<evidence type="ECO:0000269" key="5">
    <source>
    </source>
</evidence>
<evidence type="ECO:0000269" key="6">
    <source>
    </source>
</evidence>
<evidence type="ECO:0000269" key="7">
    <source>
    </source>
</evidence>
<evidence type="ECO:0000269" key="8">
    <source>
    </source>
</evidence>
<evidence type="ECO:0000269" key="9">
    <source>
    </source>
</evidence>
<evidence type="ECO:0000269" key="10">
    <source>
    </source>
</evidence>
<evidence type="ECO:0000269" key="11">
    <source>
    </source>
</evidence>
<evidence type="ECO:0000303" key="12">
    <source>
    </source>
</evidence>
<evidence type="ECO:0000305" key="13"/>
<evidence type="ECO:0000312" key="14">
    <source>
        <dbReference type="Araport" id="AT1G77110"/>
    </source>
</evidence>
<evidence type="ECO:0000312" key="15">
    <source>
        <dbReference type="EMBL" id="AAC00629.1"/>
    </source>
</evidence>
<accession>Q9SQH6</accession>
<accession>O49294</accession>
<comment type="function">
    <text evidence="4 6 8 9 11">Component of the intracellular auxin-transport pathway (PubMed:19506555). Regulates auxin transport and auxin homeostasis (PubMed:23922907). Directly involved in the regulation of nectar production (PubMed:23551385). Involved in unfolded protein response (UPR) activation (PubMed:24180465). Involved in the control of vein patterning (PubMed:23437008, PubMed:24304505). Redundantly with PIN8, inhibits the vein-formation-promoting functions of PIN5 (PubMed:26560462). PIN5, PIN6, and PIN8 control vein network geometry, but they are expressed in mutually exclusive domains of leaf vascular cells (PubMed:26560462).</text>
</comment>
<comment type="subunit">
    <text evidence="1">Homodimer.</text>
</comment>
<comment type="subcellular location">
    <subcellularLocation>
        <location evidence="4 6">Endoplasmic reticulum membrane</location>
        <topology evidence="13">Multi-pass membrane protein</topology>
    </subcellularLocation>
</comment>
<comment type="tissue specificity">
    <text evidence="5 6 7 8 10 11">Expressed in the vasculature of the primary root, cotyledons, floral stem, sepals and the main transmitting tract of the reproductive silique (PubMed:23922907, PubMed:24487186). Expressed in embryos, shoot meristem, root tip and lateral root meristems (PubMed:23922907). Expressed in the nectaries and the floral organ boundaries of the anthers (PubMed:23551385, PubMed:23922907). Detected in pollen (PubMed:22540348). Expressed in broad subepidermal domains that narrowed to sites of vein formation (PubMed:23437008). Expressed in veins of mature leaves (PubMed:24487186, PubMed:26560462).</text>
</comment>
<comment type="developmental stage">
    <text evidence="6 8">Expressed during vein formation (PubMed:23437008). Decreased expression during seedling development (PubMed:23922907).</text>
</comment>
<comment type="induction">
    <text evidence="8 9">Up-regulated by auxin (PubMed:23922907). Down-regulated by endoplasmic reticulum stress treatment (PubMed:24180465).</text>
</comment>
<comment type="disruption phenotype">
    <text evidence="7 8">Enhanced root growth and faster lateral root development (PubMed:23922907). Altered floral morphology and nectar secretion (PubMed:23551385).</text>
</comment>
<comment type="similarity">
    <text evidence="13">Belongs to the auxin efflux carrier (TC 2.A.69.1) family.</text>
</comment>
<comment type="sequence caution" evidence="13">
    <conflict type="erroneous gene model prediction">
        <sequence resource="EMBL-CDS" id="AAC00629"/>
    </conflict>
</comment>
<sequence>MITGNEFYTVMCAMAPLYFAMFVAYGSVKWCKIFTPAQCSGINRFVSVFAVPVLSFHFISQNNPYKMDTMFILADTLSKIFVFVLLSLWAVFFKAGGLDWLITLFSIATLPNTLVMGIPLLQAMYGDYTQTLMVQLVVLQCIIWYTLLLFLFELRAARLLIRAEFPGQAAGSIAKIQVDDDVISLDGMDPLRTETETDVNGRIRLRIRRSVSSVPDSVMSSSLCLTPRASNLSNAEIFSVNTPNNRFFHGGGGSGTLQFYNGSNEIMFCNGDLGGFGFTRPGLGASPRRLSGYASSDAYSLQPTPRASNFNELDVNGNGTPVWMKSPAAGRIYRQSSPKMMWESGQRHAAKDINGSVPEKEISFRDALKAAPQATAAGGGASMEEGAAGKDTTPVAAIGKQEMPSAIVMMRLILTVVGRKLSRNPNTYSSLLGLVWSLISFKWNIPMPNIVDFSIKIISDAGLGMAMFSLGLFMALQPKMIPCGAKKATMGMLIRFISGPLFMAGASLLVGLRGSRLHAAIVQAALPQGIVPFVFAREYNLHPDLLSTLVIFGMIVSLPVTILYYVLLGL</sequence>
<proteinExistence type="evidence at transcript level"/>
<keyword id="KW-0927">Auxin signaling pathway</keyword>
<keyword id="KW-0256">Endoplasmic reticulum</keyword>
<keyword id="KW-0472">Membrane</keyword>
<keyword id="KW-0597">Phosphoprotein</keyword>
<keyword id="KW-1185">Reference proteome</keyword>
<keyword id="KW-0812">Transmembrane</keyword>
<keyword id="KW-1133">Transmembrane helix</keyword>
<keyword id="KW-0813">Transport</keyword>
<name>PIN6_ARATH</name>
<organism>
    <name type="scientific">Arabidopsis thaliana</name>
    <name type="common">Mouse-ear cress</name>
    <dbReference type="NCBI Taxonomy" id="3702"/>
    <lineage>
        <taxon>Eukaryota</taxon>
        <taxon>Viridiplantae</taxon>
        <taxon>Streptophyta</taxon>
        <taxon>Embryophyta</taxon>
        <taxon>Tracheophyta</taxon>
        <taxon>Spermatophyta</taxon>
        <taxon>Magnoliopsida</taxon>
        <taxon>eudicotyledons</taxon>
        <taxon>Gunneridae</taxon>
        <taxon>Pentapetalae</taxon>
        <taxon>rosids</taxon>
        <taxon>malvids</taxon>
        <taxon>Brassicales</taxon>
        <taxon>Brassicaceae</taxon>
        <taxon>Camelineae</taxon>
        <taxon>Arabidopsis</taxon>
    </lineage>
</organism>
<reference key="1">
    <citation type="submission" date="1998-08" db="EMBL/GenBank/DDBJ databases">
        <title>PIN gene family in Arabidopsis thaliana.</title>
        <authorList>
            <person name="Friml J."/>
            <person name="Wisniewska J."/>
            <person name="Palme K."/>
        </authorList>
    </citation>
    <scope>NUCLEOTIDE SEQUENCE [MRNA]</scope>
</reference>
<reference key="2">
    <citation type="journal article" date="2000" name="Nature">
        <title>Sequence and analysis of chromosome 1 of the plant Arabidopsis thaliana.</title>
        <authorList>
            <person name="Theologis A."/>
            <person name="Ecker J.R."/>
            <person name="Palm C.J."/>
            <person name="Federspiel N.A."/>
            <person name="Kaul S."/>
            <person name="White O."/>
            <person name="Alonso J."/>
            <person name="Altafi H."/>
            <person name="Araujo R."/>
            <person name="Bowman C.L."/>
            <person name="Brooks S.Y."/>
            <person name="Buehler E."/>
            <person name="Chan A."/>
            <person name="Chao Q."/>
            <person name="Chen H."/>
            <person name="Cheuk R.F."/>
            <person name="Chin C.W."/>
            <person name="Chung M.K."/>
            <person name="Conn L."/>
            <person name="Conway A.B."/>
            <person name="Conway A.R."/>
            <person name="Creasy T.H."/>
            <person name="Dewar K."/>
            <person name="Dunn P."/>
            <person name="Etgu P."/>
            <person name="Feldblyum T.V."/>
            <person name="Feng J.-D."/>
            <person name="Fong B."/>
            <person name="Fujii C.Y."/>
            <person name="Gill J.E."/>
            <person name="Goldsmith A.D."/>
            <person name="Haas B."/>
            <person name="Hansen N.F."/>
            <person name="Hughes B."/>
            <person name="Huizar L."/>
            <person name="Hunter J.L."/>
            <person name="Jenkins J."/>
            <person name="Johnson-Hopson C."/>
            <person name="Khan S."/>
            <person name="Khaykin E."/>
            <person name="Kim C.J."/>
            <person name="Koo H.L."/>
            <person name="Kremenetskaia I."/>
            <person name="Kurtz D.B."/>
            <person name="Kwan A."/>
            <person name="Lam B."/>
            <person name="Langin-Hooper S."/>
            <person name="Lee A."/>
            <person name="Lee J.M."/>
            <person name="Lenz C.A."/>
            <person name="Li J.H."/>
            <person name="Li Y.-P."/>
            <person name="Lin X."/>
            <person name="Liu S.X."/>
            <person name="Liu Z.A."/>
            <person name="Luros J.S."/>
            <person name="Maiti R."/>
            <person name="Marziali A."/>
            <person name="Militscher J."/>
            <person name="Miranda M."/>
            <person name="Nguyen M."/>
            <person name="Nierman W.C."/>
            <person name="Osborne B.I."/>
            <person name="Pai G."/>
            <person name="Peterson J."/>
            <person name="Pham P.K."/>
            <person name="Rizzo M."/>
            <person name="Rooney T."/>
            <person name="Rowley D."/>
            <person name="Sakano H."/>
            <person name="Salzberg S.L."/>
            <person name="Schwartz J.R."/>
            <person name="Shinn P."/>
            <person name="Southwick A.M."/>
            <person name="Sun H."/>
            <person name="Tallon L.J."/>
            <person name="Tambunga G."/>
            <person name="Toriumi M.J."/>
            <person name="Town C.D."/>
            <person name="Utterback T."/>
            <person name="Van Aken S."/>
            <person name="Vaysberg M."/>
            <person name="Vysotskaia V.S."/>
            <person name="Walker M."/>
            <person name="Wu D."/>
            <person name="Yu G."/>
            <person name="Fraser C.M."/>
            <person name="Venter J.C."/>
            <person name="Davis R.W."/>
        </authorList>
    </citation>
    <scope>NUCLEOTIDE SEQUENCE [LARGE SCALE GENOMIC DNA]</scope>
    <source>
        <strain>cv. Columbia</strain>
    </source>
</reference>
<reference key="3">
    <citation type="journal article" date="2017" name="Plant J.">
        <title>Araport11: a complete reannotation of the Arabidopsis thaliana reference genome.</title>
        <authorList>
            <person name="Cheng C.Y."/>
            <person name="Krishnakumar V."/>
            <person name="Chan A.P."/>
            <person name="Thibaud-Nissen F."/>
            <person name="Schobel S."/>
            <person name="Town C.D."/>
        </authorList>
    </citation>
    <scope>GENOME REANNOTATION</scope>
    <source>
        <strain>cv. Columbia</strain>
    </source>
</reference>
<reference key="4">
    <citation type="journal article" date="2005" name="Trends Plant Sci.">
        <title>The PIN auxin efflux facilitators: evolutionary and functional perspectives.</title>
        <authorList>
            <person name="Paponov I.A."/>
            <person name="Teale W.D."/>
            <person name="Trebar M."/>
            <person name="Blilou I."/>
            <person name="Palme K."/>
        </authorList>
    </citation>
    <scope>GENE FAMILY</scope>
    <scope>NOMENCLATURE</scope>
</reference>
<reference key="5">
    <citation type="journal article" date="2009" name="Nature">
        <title>Subcellular homeostasis of phytohormone auxin is mediated by the ER-localized PIN5 transporter.</title>
        <authorList>
            <person name="Mravec J."/>
            <person name="Skupa P."/>
            <person name="Bailly A."/>
            <person name="Hoyerova K."/>
            <person name="Krecek P."/>
            <person name="Bielach A."/>
            <person name="Petrasek J."/>
            <person name="Zhang J."/>
            <person name="Gaykova V."/>
            <person name="Stierhof Y.D."/>
            <person name="Dobrev P.I."/>
            <person name="Schwarzerova K."/>
            <person name="Rolcik J."/>
            <person name="Seifertova D."/>
            <person name="Luschnig C."/>
            <person name="Benkova E."/>
            <person name="Zazimalova E."/>
            <person name="Geisler M."/>
            <person name="Friml J."/>
        </authorList>
    </citation>
    <scope>SUBCELLULAR LOCATION</scope>
    <scope>FUNCTION</scope>
</reference>
<reference key="6">
    <citation type="journal article" date="2012" name="Plant J.">
        <title>The endoplasmic reticulum localized PIN8 is a pollen-specific auxin carrier involved in intracellular auxin homeostasis.</title>
        <authorList>
            <person name="Dal Bosco C."/>
            <person name="Dovzhenko A."/>
            <person name="Liu X."/>
            <person name="Woerner N."/>
            <person name="Rensch T."/>
            <person name="Eismann M."/>
            <person name="Eimer S."/>
            <person name="Hegermann J."/>
            <person name="Paponov I.A."/>
            <person name="Ruperti B."/>
            <person name="Heberle-Bors E."/>
            <person name="Touraev A."/>
            <person name="Cohen J.D."/>
            <person name="Palme K."/>
        </authorList>
    </citation>
    <scope>TISSUE SPECIFICITY</scope>
</reference>
<reference key="7">
    <citation type="journal article" date="2013" name="Plant J.">
        <title>PIN6 is required for nectary auxin response and short stamen development.</title>
        <authorList>
            <person name="Bender R.L."/>
            <person name="Fekete M.L."/>
            <person name="Klinkenberg P.M."/>
            <person name="Hampton M."/>
            <person name="Bauer B."/>
            <person name="Malecha M."/>
            <person name="Lindgren K."/>
            <person name="Maki J.A."/>
            <person name="Perera M.A."/>
            <person name="Nikolau B.J."/>
            <person name="Carter C.J."/>
        </authorList>
    </citation>
    <scope>FUNCTION</scope>
    <scope>TISSUE SPECIFICITY</scope>
    <scope>DISRUPTION PHENOTYPE</scope>
</reference>
<reference key="8">
    <citation type="journal article" date="2013" name="PLoS Genet.">
        <title>Patterning of leaf vein networks by convergent auxin transport pathways.</title>
        <authorList>
            <person name="Sawchuk M.G."/>
            <person name="Edgar A."/>
            <person name="Scarpella E."/>
        </authorList>
    </citation>
    <scope>FUNCTION</scope>
    <scope>DEVELOPMENTAL STAGE</scope>
    <scope>SUBCELLULAR LOCATION</scope>
    <scope>TISSUE SPECIFICITY</scope>
</reference>
<reference key="9">
    <citation type="journal article" date="2013" name="Plant Signal. Behav.">
        <title>Control of vein patterning by intracellular auxin transport.</title>
        <authorList>
            <person name="Sawchuk M.G."/>
            <person name="Scarpella E."/>
        </authorList>
    </citation>
    <scope>FUNCTION</scope>
</reference>
<reference key="10">
    <citation type="journal article" date="2013" name="PLoS ONE">
        <title>Role of the Arabidopsis PIN6 auxin transporter in auxin homeostasis and auxin-mediated development.</title>
        <authorList>
            <person name="Cazzonelli C.I."/>
            <person name="Vanstraelen M."/>
            <person name="Simon S."/>
            <person name="Yin K."/>
            <person name="Carron-Arthur A."/>
            <person name="Nisar N."/>
            <person name="Tarle G."/>
            <person name="Cuttriss A.J."/>
            <person name="Searle I.R."/>
            <person name="Benkova E."/>
            <person name="Mathesius U."/>
            <person name="Masle J."/>
            <person name="Friml J."/>
            <person name="Pogson B.J."/>
        </authorList>
    </citation>
    <scope>FUNCTION</scope>
    <scope>TISSUE SPECIFICITY</scope>
    <scope>INDUCTION BY AUXIN</scope>
    <scope>DEVELOPMENTAL STAGE</scope>
    <scope>DISRUPTION PHENOTYPE</scope>
</reference>
<reference key="11">
    <citation type="journal article" date="2014" name="Plant J.">
        <title>Inter-regulation of the unfolded protein response and auxin signaling.</title>
        <authorList>
            <person name="Chen Y."/>
            <person name="Aung K."/>
            <person name="Rolcik J."/>
            <person name="Walicki K."/>
            <person name="Friml J."/>
            <person name="Brandizzi F."/>
        </authorList>
    </citation>
    <scope>INDUCTION</scope>
    <scope>FUNCTION</scope>
</reference>
<reference key="12">
    <citation type="journal article" date="2014" name="Plant Signal. Behav.">
        <title>The promoter of the Arabidopsis PIN6 auxin transporter enabled strong expression in the vasculature of roots, leaves, floral stems and reproductive organs.</title>
        <authorList>
            <person name="Nisar N."/>
            <person name="Cuttriss A.J."/>
            <person name="Pogson B.J."/>
            <person name="Cazzonelli C.I."/>
        </authorList>
    </citation>
    <scope>TISSUE SPECIFICITY</scope>
</reference>
<reference key="13">
    <citation type="journal article" date="2015" name="BMC Biol.">
        <title>Control of vein network topology by auxin transport.</title>
        <authorList>
            <person name="Verna C."/>
            <person name="Sawchuk M.G."/>
            <person name="Linh N.M."/>
            <person name="Scarpella E."/>
        </authorList>
    </citation>
    <scope>TISSUE SPECIFICITY</scope>
    <scope>FUNCTION</scope>
</reference>